<reference key="1">
    <citation type="journal article" date="1991" name="Brain Res. Mol. Brain Res.">
        <title>The mouse 5-HT1C receptor contains eight hydrophobic domains and is X-linked.</title>
        <authorList>
            <person name="Yu L."/>
            <person name="Nguyen H."/>
            <person name="Le H."/>
            <person name="Bloem L.J."/>
            <person name="Kozak C.A."/>
            <person name="Hoffman B.J."/>
            <person name="Snutch T.P."/>
            <person name="Lester H.A."/>
            <person name="Davidson N."/>
            <person name="Luebbert H."/>
        </authorList>
    </citation>
    <scope>NUCLEOTIDE SEQUENCE [MRNA]</scope>
</reference>
<reference key="2">
    <citation type="journal article" date="1992" name="NeuroReport">
        <title>Structure of the mouse 5-HT1C, 5-HT2 and stomach fundus serotonin receptor genes.</title>
        <authorList>
            <person name="Foguet M."/>
            <person name="Nguyen H."/>
            <person name="Le H."/>
            <person name="Luebbert H."/>
        </authorList>
    </citation>
    <scope>NUCLEOTIDE SEQUENCE [GENOMIC DNA]</scope>
</reference>
<reference key="3">
    <citation type="journal article" date="2009" name="PLoS Biol.">
        <title>Lineage-specific biology revealed by a finished genome assembly of the mouse.</title>
        <authorList>
            <person name="Church D.M."/>
            <person name="Goodstadt L."/>
            <person name="Hillier L.W."/>
            <person name="Zody M.C."/>
            <person name="Goldstein S."/>
            <person name="She X."/>
            <person name="Bult C.J."/>
            <person name="Agarwala R."/>
            <person name="Cherry J.L."/>
            <person name="DiCuccio M."/>
            <person name="Hlavina W."/>
            <person name="Kapustin Y."/>
            <person name="Meric P."/>
            <person name="Maglott D."/>
            <person name="Birtle Z."/>
            <person name="Marques A.C."/>
            <person name="Graves T."/>
            <person name="Zhou S."/>
            <person name="Teague B."/>
            <person name="Potamousis K."/>
            <person name="Churas C."/>
            <person name="Place M."/>
            <person name="Herschleb J."/>
            <person name="Runnheim R."/>
            <person name="Forrest D."/>
            <person name="Amos-Landgraf J."/>
            <person name="Schwartz D.C."/>
            <person name="Cheng Z."/>
            <person name="Lindblad-Toh K."/>
            <person name="Eichler E.E."/>
            <person name="Ponting C.P."/>
        </authorList>
    </citation>
    <scope>NUCLEOTIDE SEQUENCE [LARGE SCALE GENOMIC DNA]</scope>
    <source>
        <strain>C57BL/6J</strain>
    </source>
</reference>
<reference key="4">
    <citation type="journal article" date="1995" name="Nature">
        <title>Eating disorder and epilepsy in mice lacking 5-HT2c serotonin receptors.</title>
        <authorList>
            <person name="Tecott L.H."/>
            <person name="Sun L.M."/>
            <person name="Akana S.F."/>
            <person name="Strack A.M."/>
            <person name="Lowenstein D.H."/>
            <person name="Dallman M.F."/>
            <person name="Julius D."/>
        </authorList>
    </citation>
    <scope>DISRUPTION PHENOTYPE</scope>
    <scope>FUNCTION</scope>
    <scope>TISSUE SPECIFICITY</scope>
</reference>
<reference key="5">
    <citation type="journal article" date="1998" name="Nat. Med.">
        <title>Leptin-independent hyperphagia and type 2 diabetes in mice with a mutated serotonin 5-HT2C receptor gene.</title>
        <authorList>
            <person name="Nonogaki K."/>
            <person name="Strack A.M."/>
            <person name="Dallman M.F."/>
            <person name="Tecott L.H."/>
        </authorList>
    </citation>
    <scope>DISRUPTION PHENOTYPE</scope>
    <scope>FUNCTION</scope>
</reference>
<reference key="6">
    <citation type="journal article" date="2006" name="Mol. Biol. Cell">
        <title>Opposite effects of PSD-95 and MPP3 PDZ proteins on serotonin 5-hydroxytryptamine2C receptor desensitization and membrane stability.</title>
        <authorList>
            <person name="Gavarini S."/>
            <person name="Becamel C."/>
            <person name="Altier C."/>
            <person name="Lory P."/>
            <person name="Poncet J."/>
            <person name="Wijnholds J."/>
            <person name="Bockaert J."/>
            <person name="Marin P."/>
        </authorList>
    </citation>
    <scope>INTERACTION WITH MPP3</scope>
</reference>
<reference key="7">
    <citation type="journal article" date="2007" name="Genes Brain Behav.">
        <title>Serotonin 5-HT(2C) receptors regulate anxiety-like behavior.</title>
        <authorList>
            <person name="Heisler L.K."/>
            <person name="Zhou L."/>
            <person name="Bajwa P."/>
            <person name="Hsu J."/>
            <person name="Tecott L.H."/>
        </authorList>
    </citation>
    <scope>DISRUPTION PHENOTYPE</scope>
    <scope>FUNCTION</scope>
</reference>
<reference key="8">
    <citation type="journal article" date="2007" name="J. Neurosci.">
        <title>Serotonin activates the hypothalamic-pituitary-adrenal axis via serotonin 2C receptor stimulation.</title>
        <authorList>
            <person name="Heisler L.K."/>
            <person name="Pronchuk N."/>
            <person name="Nonogaki K."/>
            <person name="Zhou L."/>
            <person name="Raber J."/>
            <person name="Tung L."/>
            <person name="Yeo G.S."/>
            <person name="O'Rahilly S."/>
            <person name="Colmers W.F."/>
            <person name="Elmquist J.K."/>
            <person name="Tecott L.H."/>
        </authorList>
    </citation>
    <scope>DISRUPTION PHENOTYPE</scope>
    <scope>FUNCTION</scope>
    <scope>TISSUE SPECIFICITY</scope>
</reference>
<reference key="9">
    <citation type="journal article" date="2008" name="Neuron">
        <title>5-HT2CRs expressed by pro-opiomelanocortin neurons regulate energy homeostasis.</title>
        <authorList>
            <person name="Xu Y."/>
            <person name="Jones J.E."/>
            <person name="Kohno D."/>
            <person name="Williams K.W."/>
            <person name="Lee C.E."/>
            <person name="Choi M.J."/>
            <person name="Anderson J.G."/>
            <person name="Heisler L.K."/>
            <person name="Zigman J.M."/>
            <person name="Lowell B.B."/>
            <person name="Elmquist J.K."/>
        </authorList>
    </citation>
    <scope>DISRUPTION PHENOTYPE</scope>
    <scope>FUNCTION</scope>
    <scope>TISSUE SPECIFICITY</scope>
</reference>
<reference key="10">
    <citation type="journal article" date="2009" name="Neuropharmacology">
        <title>Characterizing the effects of 5-HT(2C) receptor ligands on motor activity and feeding behaviour in 5-HT(2C) receptor knockout mice.</title>
        <authorList>
            <person name="Fletcher P.J."/>
            <person name="Tampakeras M."/>
            <person name="Sinyard J."/>
            <person name="Slassi A."/>
            <person name="Isaac M."/>
            <person name="Higgins G.A."/>
        </authorList>
    </citation>
    <scope>DISRUPTION PHENOTYPE</scope>
</reference>
<reference key="11">
    <citation type="journal article" date="2010" name="J. Neurosci.">
        <title>A serotonin and melanocortin circuit mediates D-fenfluramine anorexia.</title>
        <authorList>
            <person name="Xu Y."/>
            <person name="Jones J.E."/>
            <person name="Lauzon D.A."/>
            <person name="Anderson J.G."/>
            <person name="Balthasar N."/>
            <person name="Heisler L.K."/>
            <person name="Zinn A.R."/>
            <person name="Lowell B.B."/>
            <person name="Elmquist J.K."/>
        </authorList>
    </citation>
    <scope>DISRUPTION PHENOTYPE</scope>
    <scope>FUNCTION</scope>
</reference>
<reference key="12">
    <citation type="journal article" date="2010" name="Nat. Neurosci.">
        <title>5-HT2CRs expressed by pro-opiomelanocortin neurons regulate insulin sensitivity in liver.</title>
        <authorList>
            <person name="Xu Y."/>
            <person name="Berglund E.D."/>
            <person name="Sohn J.W."/>
            <person name="Holland W.L."/>
            <person name="Chuang J.C."/>
            <person name="Fukuda M."/>
            <person name="Rossi J."/>
            <person name="Williams K.W."/>
            <person name="Jones J.E."/>
            <person name="Zigman J.M."/>
            <person name="Lowell B.B."/>
            <person name="Scherer P.E."/>
            <person name="Elmquist J.K."/>
        </authorList>
    </citation>
    <scope>DISRUPTION PHENOTYPE</scope>
    <scope>FUNCTION</scope>
</reference>
<reference key="13">
    <citation type="journal article" date="2011" name="Neuron">
        <title>Serotonin 2C receptor activates a distinct population of arcuate pro-opiomelanocortin neurons via TRPC channels.</title>
        <authorList>
            <person name="Sohn J.W."/>
            <person name="Xu Y."/>
            <person name="Jones J.E."/>
            <person name="Wickman K."/>
            <person name="Williams K.W."/>
            <person name="Elmquist J.K."/>
        </authorList>
    </citation>
    <scope>DISRUPTION PHENOTYPE</scope>
    <scope>FUNCTION</scope>
</reference>
<accession>P34968</accession>
<accession>B1ATN5</accession>
<accession>Q5WRU6</accession>
<keyword id="KW-0085">Behavior</keyword>
<keyword id="KW-1003">Cell membrane</keyword>
<keyword id="KW-1015">Disulfide bond</keyword>
<keyword id="KW-0297">G-protein coupled receptor</keyword>
<keyword id="KW-0325">Glycoprotein</keyword>
<keyword id="KW-0472">Membrane</keyword>
<keyword id="KW-0675">Receptor</keyword>
<keyword id="KW-1185">Reference proteome</keyword>
<keyword id="KW-0732">Signal</keyword>
<keyword id="KW-0807">Transducer</keyword>
<keyword id="KW-0812">Transmembrane</keyword>
<keyword id="KW-1133">Transmembrane helix</keyword>
<protein>
    <recommendedName>
        <fullName evidence="16">5-hydroxytryptamine receptor 2C</fullName>
        <shortName>5-HT-2C</shortName>
        <shortName>5-HT2C</shortName>
        <shortName>5-HTR2C</shortName>
    </recommendedName>
    <alternativeName>
        <fullName>5-hydroxytryptamine receptor 1C</fullName>
        <shortName>5-HT-1C</shortName>
        <shortName>5-HT1C</shortName>
    </alternativeName>
    <alternativeName>
        <fullName>Serotonin receptor 2C</fullName>
    </alternativeName>
</protein>
<name>5HT2C_MOUSE</name>
<proteinExistence type="evidence at protein level"/>
<organism>
    <name type="scientific">Mus musculus</name>
    <name type="common">Mouse</name>
    <dbReference type="NCBI Taxonomy" id="10090"/>
    <lineage>
        <taxon>Eukaryota</taxon>
        <taxon>Metazoa</taxon>
        <taxon>Chordata</taxon>
        <taxon>Craniata</taxon>
        <taxon>Vertebrata</taxon>
        <taxon>Euteleostomi</taxon>
        <taxon>Mammalia</taxon>
        <taxon>Eutheria</taxon>
        <taxon>Euarchontoglires</taxon>
        <taxon>Glires</taxon>
        <taxon>Rodentia</taxon>
        <taxon>Myomorpha</taxon>
        <taxon>Muroidea</taxon>
        <taxon>Muridae</taxon>
        <taxon>Murinae</taxon>
        <taxon>Mus</taxon>
        <taxon>Mus</taxon>
    </lineage>
</organism>
<gene>
    <name evidence="17" type="primary">Htr2c</name>
    <name type="synonym">5ht1c</name>
    <name type="synonym">Htr1c</name>
</gene>
<sequence length="459" mass="51929">MVNLGTAVRSLLVHLIGLLVWQFDISISPVAAIVTDTFNSSDGGRLFQFPDGVQNWPALSIVVIIIMTIGGNILVIMAVSMEKKLHNATNYFLMSLAIADMLVGLLVMPLSLLAILYDYVWPLPRYLCPVWISLDVLFSTASIMHLCAISLDRYVAIRNPIEHSRFNSRTKAIMKIAIVWAISIGVSVPIPVIGLRDESKVFVNNTTCVLNDPNFVLIGSFVAFFIPLTIMVITYFLTIYVLRRQTLMLLRGHTEEELRNISLNFLKCCCKKGDEEENAPNPNPDQKPRRKKKEKRPRGTMQAINNEKKASKVLGIVFFVFLIMWCPFFITNILSVLCGKACNQKLMEKLLNVFVWIGYVCSGINPLVYTLFNKIYRRAFSKYLRCDYKPDKKPPVRQIPRVAATALSGRELNVNIYRHTNERVVRKANDTEPGIEMQVENLELPVNPSNVVSERISSV</sequence>
<evidence type="ECO:0000250" key="1">
    <source>
        <dbReference type="UniProtKB" id="P28335"/>
    </source>
</evidence>
<evidence type="ECO:0000250" key="2">
    <source>
        <dbReference type="UniProtKB" id="P41595"/>
    </source>
</evidence>
<evidence type="ECO:0000255" key="3"/>
<evidence type="ECO:0000255" key="4">
    <source>
        <dbReference type="PROSITE-ProRule" id="PRU00521"/>
    </source>
</evidence>
<evidence type="ECO:0000256" key="5">
    <source>
        <dbReference type="SAM" id="MobiDB-lite"/>
    </source>
</evidence>
<evidence type="ECO:0000269" key="6">
    <source>
    </source>
</evidence>
<evidence type="ECO:0000269" key="7">
    <source>
    </source>
</evidence>
<evidence type="ECO:0000269" key="8">
    <source>
    </source>
</evidence>
<evidence type="ECO:0000269" key="9">
    <source>
    </source>
</evidence>
<evidence type="ECO:0000269" key="10">
    <source>
    </source>
</evidence>
<evidence type="ECO:0000269" key="11">
    <source>
    </source>
</evidence>
<evidence type="ECO:0000269" key="12">
    <source>
    </source>
</evidence>
<evidence type="ECO:0000269" key="13">
    <source>
    </source>
</evidence>
<evidence type="ECO:0000269" key="14">
    <source>
    </source>
</evidence>
<evidence type="ECO:0000269" key="15">
    <source>
    </source>
</evidence>
<evidence type="ECO:0000305" key="16"/>
<evidence type="ECO:0000312" key="17">
    <source>
        <dbReference type="MGI" id="MGI:96281"/>
    </source>
</evidence>
<feature type="signal peptide" evidence="1">
    <location>
        <begin position="1"/>
        <end position="32"/>
    </location>
</feature>
<feature type="chain" id="PRO_0000068959" description="5-hydroxytryptamine receptor 2C">
    <location>
        <begin position="33"/>
        <end position="459"/>
    </location>
</feature>
<feature type="topological domain" description="Extracellular" evidence="1">
    <location>
        <begin position="33"/>
        <end position="56"/>
    </location>
</feature>
<feature type="transmembrane region" description="Helical; Name=1" evidence="1">
    <location>
        <begin position="57"/>
        <end position="81"/>
    </location>
</feature>
<feature type="topological domain" description="Cytoplasmic" evidence="1">
    <location>
        <begin position="82"/>
        <end position="87"/>
    </location>
</feature>
<feature type="transmembrane region" description="Helical; Name=2" evidence="1">
    <location>
        <begin position="88"/>
        <end position="112"/>
    </location>
</feature>
<feature type="topological domain" description="Extracellular" evidence="1">
    <location>
        <begin position="113"/>
        <end position="129"/>
    </location>
</feature>
<feature type="transmembrane region" description="Helical; Name=3" evidence="1">
    <location>
        <begin position="130"/>
        <end position="152"/>
    </location>
</feature>
<feature type="topological domain" description="Cytoplasmic" evidence="1">
    <location>
        <begin position="153"/>
        <end position="168"/>
    </location>
</feature>
<feature type="transmembrane region" description="Helical; Name=4" evidence="1">
    <location>
        <begin position="169"/>
        <end position="190"/>
    </location>
</feature>
<feature type="topological domain" description="Extracellular" evidence="1">
    <location>
        <begin position="191"/>
        <end position="214"/>
    </location>
</feature>
<feature type="transmembrane region" description="Helical; Name=5" evidence="1">
    <location>
        <begin position="215"/>
        <end position="237"/>
    </location>
</feature>
<feature type="topological domain" description="Cytoplasmic" evidence="1">
    <location>
        <begin position="238"/>
        <end position="312"/>
    </location>
</feature>
<feature type="transmembrane region" description="Helical; Name=6" evidence="1">
    <location>
        <begin position="313"/>
        <end position="337"/>
    </location>
</feature>
<feature type="topological domain" description="Extracellular" evidence="1">
    <location>
        <begin position="338"/>
        <end position="348"/>
    </location>
</feature>
<feature type="transmembrane region" description="Helical; Name=7" evidence="1">
    <location>
        <begin position="349"/>
        <end position="371"/>
    </location>
</feature>
<feature type="topological domain" description="Cytoplasmic" evidence="1">
    <location>
        <begin position="372"/>
        <end position="459"/>
    </location>
</feature>
<feature type="region of interest" description="Disordered" evidence="5">
    <location>
        <begin position="274"/>
        <end position="302"/>
    </location>
</feature>
<feature type="short sequence motif" description="DRY motif; important for ligand-induced conformation changes" evidence="2">
    <location>
        <begin position="152"/>
        <end position="154"/>
    </location>
</feature>
<feature type="short sequence motif" description="NPxxY motif; important for ligand-induced conformation changes and signaling" evidence="2">
    <location>
        <begin position="365"/>
        <end position="369"/>
    </location>
</feature>
<feature type="short sequence motif" description="PDZ-binding">
    <location>
        <begin position="457"/>
        <end position="459"/>
    </location>
</feature>
<feature type="compositionally biased region" description="Basic residues" evidence="5">
    <location>
        <begin position="288"/>
        <end position="298"/>
    </location>
</feature>
<feature type="binding site" evidence="1">
    <location>
        <position position="140"/>
    </location>
    <ligand>
        <name>ergotamine</name>
        <dbReference type="ChEBI" id="CHEBI:190463"/>
        <note>agonist</note>
    </ligand>
</feature>
<feature type="binding site" evidence="1">
    <location>
        <position position="210"/>
    </location>
    <ligand>
        <name>ergotamine</name>
        <dbReference type="ChEBI" id="CHEBI:190463"/>
        <note>agonist</note>
    </ligand>
</feature>
<feature type="glycosylation site" description="N-linked (GlcNAc...) asparagine" evidence="3">
    <location>
        <position position="204"/>
    </location>
</feature>
<feature type="glycosylation site" description="N-linked (GlcNAc...) asparagine" evidence="3">
    <location>
        <position position="205"/>
    </location>
</feature>
<feature type="disulfide bond" evidence="4">
    <location>
        <begin position="128"/>
        <end position="208"/>
    </location>
</feature>
<feature type="disulfide bond" evidence="4">
    <location>
        <begin position="338"/>
        <end position="342"/>
    </location>
</feature>
<feature type="sequence conflict" description="In Ref. 1; CAA51031 and 2; AAA10521." evidence="16" ref="1 2">
    <original>IRNPI</original>
    <variation>VRSPV</variation>
    <location>
        <begin position="157"/>
        <end position="161"/>
    </location>
</feature>
<dbReference type="EMBL" id="X72230">
    <property type="protein sequence ID" value="CAA51031.1"/>
    <property type="molecule type" value="mRNA"/>
</dbReference>
<dbReference type="EMBL" id="S44559">
    <property type="protein sequence ID" value="AAA10521.1"/>
    <property type="molecule type" value="Genomic_DNA"/>
</dbReference>
<dbReference type="EMBL" id="S44556">
    <property type="protein sequence ID" value="AAA10521.1"/>
    <property type="status" value="JOINED"/>
    <property type="molecule type" value="Genomic_DNA"/>
</dbReference>
<dbReference type="EMBL" id="S44557">
    <property type="protein sequence ID" value="AAA10521.1"/>
    <property type="status" value="JOINED"/>
    <property type="molecule type" value="Genomic_DNA"/>
</dbReference>
<dbReference type="EMBL" id="S44558">
    <property type="protein sequence ID" value="AAA10521.1"/>
    <property type="status" value="JOINED"/>
    <property type="molecule type" value="Genomic_DNA"/>
</dbReference>
<dbReference type="EMBL" id="AL662932">
    <property type="status" value="NOT_ANNOTATED_CDS"/>
    <property type="molecule type" value="Genomic_DNA"/>
</dbReference>
<dbReference type="EMBL" id="AL808014">
    <property type="status" value="NOT_ANNOTATED_CDS"/>
    <property type="molecule type" value="Genomic_DNA"/>
</dbReference>
<dbReference type="CCDS" id="CCDS30459.1"/>
<dbReference type="PIR" id="A43951">
    <property type="entry name" value="A43951"/>
</dbReference>
<dbReference type="RefSeq" id="NP_032338.3">
    <property type="nucleotide sequence ID" value="NM_008312.4"/>
</dbReference>
<dbReference type="SMR" id="P34968"/>
<dbReference type="CORUM" id="P34968"/>
<dbReference type="FunCoup" id="P34968">
    <property type="interactions" value="770"/>
</dbReference>
<dbReference type="STRING" id="10090.ENSMUSP00000094021"/>
<dbReference type="BindingDB" id="P34968"/>
<dbReference type="ChEMBL" id="CHEMBL3006"/>
<dbReference type="DrugCentral" id="P34968"/>
<dbReference type="GlyCosmos" id="P34968">
    <property type="glycosylation" value="3 sites, No reported glycans"/>
</dbReference>
<dbReference type="GlyGen" id="P34968">
    <property type="glycosylation" value="3 sites"/>
</dbReference>
<dbReference type="iPTMnet" id="P34968"/>
<dbReference type="PhosphoSitePlus" id="P34968"/>
<dbReference type="PaxDb" id="10090-ENSMUSP00000043936"/>
<dbReference type="ProteomicsDB" id="285690"/>
<dbReference type="Antibodypedia" id="527">
    <property type="antibodies" value="497 antibodies from 36 providers"/>
</dbReference>
<dbReference type="DNASU" id="15560"/>
<dbReference type="Ensembl" id="ENSMUST00000036303.9">
    <property type="protein sequence ID" value="ENSMUSP00000043936.3"/>
    <property type="gene ID" value="ENSMUSG00000041380.14"/>
</dbReference>
<dbReference type="Ensembl" id="ENSMUST00000096299.9">
    <property type="protein sequence ID" value="ENSMUSP00000094021.3"/>
    <property type="gene ID" value="ENSMUSG00000041380.14"/>
</dbReference>
<dbReference type="GeneID" id="15560"/>
<dbReference type="KEGG" id="mmu:15560"/>
<dbReference type="UCSC" id="uc009und.2">
    <property type="organism name" value="mouse"/>
</dbReference>
<dbReference type="AGR" id="MGI:96281"/>
<dbReference type="CTD" id="3358"/>
<dbReference type="MGI" id="MGI:96281">
    <property type="gene designation" value="Htr2c"/>
</dbReference>
<dbReference type="VEuPathDB" id="HostDB:ENSMUSG00000041380"/>
<dbReference type="eggNOG" id="KOG3656">
    <property type="taxonomic scope" value="Eukaryota"/>
</dbReference>
<dbReference type="GeneTree" id="ENSGT01050000244937"/>
<dbReference type="HOGENOM" id="CLU_009579_11_3_1"/>
<dbReference type="InParanoid" id="P34968"/>
<dbReference type="OMA" id="YRNGNEF"/>
<dbReference type="OrthoDB" id="420518at2759"/>
<dbReference type="PhylomeDB" id="P34968"/>
<dbReference type="TreeFam" id="TF316350"/>
<dbReference type="Reactome" id="R-MMU-390666">
    <property type="pathway name" value="Serotonin receptors"/>
</dbReference>
<dbReference type="Reactome" id="R-MMU-416476">
    <property type="pathway name" value="G alpha (q) signalling events"/>
</dbReference>
<dbReference type="BioGRID-ORCS" id="15560">
    <property type="hits" value="4 hits in 82 CRISPR screens"/>
</dbReference>
<dbReference type="ChiTaRS" id="Htr2c">
    <property type="organism name" value="mouse"/>
</dbReference>
<dbReference type="PRO" id="PR:P34968"/>
<dbReference type="Proteomes" id="UP000000589">
    <property type="component" value="Chromosome X"/>
</dbReference>
<dbReference type="RNAct" id="P34968">
    <property type="molecule type" value="protein"/>
</dbReference>
<dbReference type="Bgee" id="ENSMUSG00000041380">
    <property type="expression patterns" value="Expressed in choroid plexus epithelium and 80 other cell types or tissues"/>
</dbReference>
<dbReference type="ExpressionAtlas" id="P34968">
    <property type="expression patterns" value="baseline and differential"/>
</dbReference>
<dbReference type="GO" id="GO:0009897">
    <property type="term" value="C:external side of plasma membrane"/>
    <property type="evidence" value="ECO:0000266"/>
    <property type="project" value="MGI"/>
</dbReference>
<dbReference type="GO" id="GO:0098666">
    <property type="term" value="C:G protein-coupled serotonin receptor complex"/>
    <property type="evidence" value="ECO:0007669"/>
    <property type="project" value="Ensembl"/>
</dbReference>
<dbReference type="GO" id="GO:0005886">
    <property type="term" value="C:plasma membrane"/>
    <property type="evidence" value="ECO:0000250"/>
    <property type="project" value="UniProtKB"/>
</dbReference>
<dbReference type="GO" id="GO:0071886">
    <property type="term" value="F:1-(4-iodo-2,5-dimethoxyphenyl)propan-2-amine binding"/>
    <property type="evidence" value="ECO:0007669"/>
    <property type="project" value="Ensembl"/>
</dbReference>
<dbReference type="GO" id="GO:0004993">
    <property type="term" value="F:G protein-coupled serotonin receptor activity"/>
    <property type="evidence" value="ECO:0000315"/>
    <property type="project" value="UniProtKB"/>
</dbReference>
<dbReference type="GO" id="GO:0001587">
    <property type="term" value="F:Gq/11-coupled serotonin receptor activity"/>
    <property type="evidence" value="ECO:0000250"/>
    <property type="project" value="UniProtKB"/>
</dbReference>
<dbReference type="GO" id="GO:0042802">
    <property type="term" value="F:identical protein binding"/>
    <property type="evidence" value="ECO:0007669"/>
    <property type="project" value="Ensembl"/>
</dbReference>
<dbReference type="GO" id="GO:0051378">
    <property type="term" value="F:serotonin binding"/>
    <property type="evidence" value="ECO:0000266"/>
    <property type="project" value="MGI"/>
</dbReference>
<dbReference type="GO" id="GO:0099589">
    <property type="term" value="F:serotonin receptor activity"/>
    <property type="evidence" value="ECO:0007669"/>
    <property type="project" value="Ensembl"/>
</dbReference>
<dbReference type="GO" id="GO:0001662">
    <property type="term" value="P:behavioral fear response"/>
    <property type="evidence" value="ECO:0000315"/>
    <property type="project" value="UniProtKB"/>
</dbReference>
<dbReference type="GO" id="GO:0019934">
    <property type="term" value="P:cGMP-mediated signaling"/>
    <property type="evidence" value="ECO:0007669"/>
    <property type="project" value="Ensembl"/>
</dbReference>
<dbReference type="GO" id="GO:0007631">
    <property type="term" value="P:feeding behavior"/>
    <property type="evidence" value="ECO:0000315"/>
    <property type="project" value="UniProtKB"/>
</dbReference>
<dbReference type="GO" id="GO:0006874">
    <property type="term" value="P:intracellular calcium ion homeostasis"/>
    <property type="evidence" value="ECO:0007669"/>
    <property type="project" value="Ensembl"/>
</dbReference>
<dbReference type="GO" id="GO:0007626">
    <property type="term" value="P:locomotory behavior"/>
    <property type="evidence" value="ECO:0007669"/>
    <property type="project" value="InterPro"/>
</dbReference>
<dbReference type="GO" id="GO:0007200">
    <property type="term" value="P:phospholipase C-activating G protein-coupled receptor signaling pathway"/>
    <property type="evidence" value="ECO:0000315"/>
    <property type="project" value="UniProtKB"/>
</dbReference>
<dbReference type="GO" id="GO:0007208">
    <property type="term" value="P:phospholipase C-activating serotonin receptor signaling pathway"/>
    <property type="evidence" value="ECO:0000315"/>
    <property type="project" value="UniProtKB"/>
</dbReference>
<dbReference type="GO" id="GO:0050850">
    <property type="term" value="P:positive regulation of calcium-mediated signaling"/>
    <property type="evidence" value="ECO:0000314"/>
    <property type="project" value="MGI"/>
</dbReference>
<dbReference type="GO" id="GO:0070374">
    <property type="term" value="P:positive regulation of ERK1 and ERK2 cascade"/>
    <property type="evidence" value="ECO:0007669"/>
    <property type="project" value="Ensembl"/>
</dbReference>
<dbReference type="GO" id="GO:0045600">
    <property type="term" value="P:positive regulation of fat cell differentiation"/>
    <property type="evidence" value="ECO:0000315"/>
    <property type="project" value="MGI"/>
</dbReference>
<dbReference type="GO" id="GO:0010513">
    <property type="term" value="P:positive regulation of phosphatidylinositol biosynthetic process"/>
    <property type="evidence" value="ECO:0007669"/>
    <property type="project" value="Ensembl"/>
</dbReference>
<dbReference type="GO" id="GO:0032098">
    <property type="term" value="P:regulation of appetite"/>
    <property type="evidence" value="ECO:0000315"/>
    <property type="project" value="UniProtKB"/>
</dbReference>
<dbReference type="GO" id="GO:0043397">
    <property type="term" value="P:regulation of corticotropin-releasing hormone secretion"/>
    <property type="evidence" value="ECO:0000315"/>
    <property type="project" value="UniProtKB"/>
</dbReference>
<dbReference type="GO" id="GO:0031644">
    <property type="term" value="P:regulation of nervous system process"/>
    <property type="evidence" value="ECO:0000315"/>
    <property type="project" value="UniProtKB"/>
</dbReference>
<dbReference type="GO" id="GO:0051209">
    <property type="term" value="P:release of sequestered calcium ion into cytosol"/>
    <property type="evidence" value="ECO:0007669"/>
    <property type="project" value="Ensembl"/>
</dbReference>
<dbReference type="CDD" id="cd15305">
    <property type="entry name" value="7tmA_5-HT2C"/>
    <property type="match status" value="1"/>
</dbReference>
<dbReference type="Gene3D" id="1.20.1070.10">
    <property type="entry name" value="Rhodopsin 7-helix transmembrane proteins"/>
    <property type="match status" value="1"/>
</dbReference>
<dbReference type="InterPro" id="IPR000377">
    <property type="entry name" value="5HT2C_rcpt"/>
</dbReference>
<dbReference type="InterPro" id="IPR002231">
    <property type="entry name" value="5HT_rcpt"/>
</dbReference>
<dbReference type="InterPro" id="IPR000276">
    <property type="entry name" value="GPCR_Rhodpsn"/>
</dbReference>
<dbReference type="InterPro" id="IPR017452">
    <property type="entry name" value="GPCR_Rhodpsn_7TM"/>
</dbReference>
<dbReference type="PANTHER" id="PTHR24247">
    <property type="entry name" value="5-HYDROXYTRYPTAMINE RECEPTOR"/>
    <property type="match status" value="1"/>
</dbReference>
<dbReference type="PANTHER" id="PTHR24247:SF32">
    <property type="entry name" value="5-HYDROXYTRYPTAMINE RECEPTOR 2C"/>
    <property type="match status" value="1"/>
</dbReference>
<dbReference type="Pfam" id="PF00001">
    <property type="entry name" value="7tm_1"/>
    <property type="match status" value="1"/>
</dbReference>
<dbReference type="PRINTS" id="PR00517">
    <property type="entry name" value="5HT2CRECEPTR"/>
</dbReference>
<dbReference type="PRINTS" id="PR01101">
    <property type="entry name" value="5HTRECEPTOR"/>
</dbReference>
<dbReference type="PRINTS" id="PR00237">
    <property type="entry name" value="GPCRRHODOPSN"/>
</dbReference>
<dbReference type="SMART" id="SM01381">
    <property type="entry name" value="7TM_GPCR_Srsx"/>
    <property type="match status" value="1"/>
</dbReference>
<dbReference type="SUPFAM" id="SSF81321">
    <property type="entry name" value="Family A G protein-coupled receptor-like"/>
    <property type="match status" value="1"/>
</dbReference>
<dbReference type="PROSITE" id="PS00237">
    <property type="entry name" value="G_PROTEIN_RECEP_F1_1"/>
    <property type="match status" value="1"/>
</dbReference>
<dbReference type="PROSITE" id="PS50262">
    <property type="entry name" value="G_PROTEIN_RECEP_F1_2"/>
    <property type="match status" value="1"/>
</dbReference>
<comment type="function">
    <text evidence="1 7 8 9 11 12 13 14 15">G-protein coupled receptor for 5-hydroxytryptamine (serotonin) (PubMed:17596444). Also functions as a receptor for various drugs and psychoactive substances, including ergot alkaloid derivatives, 1-2,5,-dimethoxy-4-iodophenyl-2-aminopropane (DOI) and lysergic acid diethylamide (LSD) (By similarity). Ligand binding causes a conformation change that triggers signaling via guanine nucleotide-binding proteins (G proteins) and modulates the activity of downstream effectors (By similarity). HTR2C is coupled to G(q)/G(11) G alpha proteins and activates phospholipase C-beta, releasing diacylglycerol (DAG) and inositol 1,4,5-trisphosphate (IP3) second messengers that modulate the activity of phosphatidylinositol 3-kinase and promote the release of Ca(2+) ions from intracellular stores, respectively (By similarity). Beta-arrestin family members inhibit signaling via G proteins and mediate activation of alternative signaling pathways (By similarity). Regulates neuronal activity via the activation of short transient receptor potential calcium channels in the brain, and thereby modulates the activation of pro-opiomelanocortin neurons and the release of CRH that then regulates the release of corticosterone (PubMed:19038216, PubMed:21037584, PubMed:21835345). Plays a role in the regulation of appetite and eating behavior, responses to anxiogenic stimuli and stress (PubMed:17451451, PubMed:21048120, PubMed:7700379). Plays a role in insulin sensitivity and glucose homeostasis (PubMed:21037584, PubMed:9771748).</text>
</comment>
<comment type="subunit">
    <text evidence="1 6">Interacts with MPDZ (By similarity). Interacts with ARRB2 (By similarity). Interacts with MPP3; this interaction stabilizes the receptor at the plasma membrane and prevents the desensitization of the HTR2C receptor-mediated calcium response (PubMed:16914526).</text>
</comment>
<comment type="subcellular location">
    <subcellularLocation>
        <location evidence="1">Cell membrane</location>
        <topology evidence="3">Multi-pass membrane protein</topology>
    </subcellularLocation>
</comment>
<comment type="tissue specificity">
    <text evidence="8 9 14">Detected in brain cortex, hypothalamus, brainstem and arcuate nucleus. Detected in the paraventricular nucleus of the hypothalamus.</text>
</comment>
<comment type="domain">
    <text evidence="1">The PDZ domain-binding motif is involved in the interaction with MPDZ.</text>
</comment>
<comment type="disruption phenotype">
    <text evidence="7 8 9 10 11 12 13 14 15">No obvious phenotype at birth, but mutant mice are prone to sudden death from seizures. When fed ad libitum, adult mice display higher body weight and increased adiposity compared to wild-type littermates. No difference in body weight is found when they receive the same amount of food as their wild-type littermates, indicating that the increased body weight is due to altered feeding behavior. Overweight older mice develop insulin resistance and impaired glucose tolerance. Young mice exhibit insulin resistance, but normal glucose tolerance, due to increased insulin levels in the blood. Insulin resistance is reversed when Htr2c expression is restored in pro-opiomelacortin neurons. Mutant mice display impaired activation of pro-opiomelacortin neurons in the paraventricular nucleus of the hypothalamus, leading to decreased release of CRH and corticosterone. Likewise, they exhibit blunted behavorial responses to anxiogenic environments and stress.</text>
</comment>
<comment type="similarity">
    <text evidence="4">Belongs to the G-protein coupled receptor 1 family.</text>
</comment>